<gene>
    <name evidence="1" type="primary">rpsP</name>
    <name type="ordered locus">Mflv_4175</name>
</gene>
<sequence length="170" mass="18328">MAVKIKLARFGKIRNPQYRISVADARNRRDGRAIEVIGRYHPKEDPSIIEIDSERAQYWLGVGAQPTEPVLQLLKITGDWQKFKGLPGAEGTLKHKEPKPSKLDLFNAALAEAEGGPSTEATTPKKKKAPAKKDEQPTEKAAEPAAEKAAEPAAEAPAEAAAESEAPAAE</sequence>
<name>RS16_MYCGI</name>
<feature type="chain" id="PRO_1000080158" description="Small ribosomal subunit protein bS16">
    <location>
        <begin position="1"/>
        <end position="170"/>
    </location>
</feature>
<feature type="region of interest" description="Disordered" evidence="2">
    <location>
        <begin position="109"/>
        <end position="170"/>
    </location>
</feature>
<feature type="compositionally biased region" description="Basic and acidic residues" evidence="2">
    <location>
        <begin position="131"/>
        <end position="150"/>
    </location>
</feature>
<feature type="compositionally biased region" description="Low complexity" evidence="2">
    <location>
        <begin position="151"/>
        <end position="170"/>
    </location>
</feature>
<organism>
    <name type="scientific">Mycolicibacterium gilvum (strain PYR-GCK)</name>
    <name type="common">Mycobacterium gilvum (strain PYR-GCK)</name>
    <dbReference type="NCBI Taxonomy" id="350054"/>
    <lineage>
        <taxon>Bacteria</taxon>
        <taxon>Bacillati</taxon>
        <taxon>Actinomycetota</taxon>
        <taxon>Actinomycetes</taxon>
        <taxon>Mycobacteriales</taxon>
        <taxon>Mycobacteriaceae</taxon>
        <taxon>Mycolicibacterium</taxon>
    </lineage>
</organism>
<evidence type="ECO:0000255" key="1">
    <source>
        <dbReference type="HAMAP-Rule" id="MF_00385"/>
    </source>
</evidence>
<evidence type="ECO:0000256" key="2">
    <source>
        <dbReference type="SAM" id="MobiDB-lite"/>
    </source>
</evidence>
<evidence type="ECO:0000305" key="3"/>
<reference key="1">
    <citation type="submission" date="2007-04" db="EMBL/GenBank/DDBJ databases">
        <title>Complete sequence of chromosome of Mycobacterium gilvum PYR-GCK.</title>
        <authorList>
            <consortium name="US DOE Joint Genome Institute"/>
            <person name="Copeland A."/>
            <person name="Lucas S."/>
            <person name="Lapidus A."/>
            <person name="Barry K."/>
            <person name="Detter J.C."/>
            <person name="Glavina del Rio T."/>
            <person name="Hammon N."/>
            <person name="Israni S."/>
            <person name="Dalin E."/>
            <person name="Tice H."/>
            <person name="Pitluck S."/>
            <person name="Chain P."/>
            <person name="Malfatti S."/>
            <person name="Shin M."/>
            <person name="Vergez L."/>
            <person name="Schmutz J."/>
            <person name="Larimer F."/>
            <person name="Land M."/>
            <person name="Hauser L."/>
            <person name="Kyrpides N."/>
            <person name="Mikhailova N."/>
            <person name="Miller C."/>
            <person name="Richardson P."/>
        </authorList>
    </citation>
    <scope>NUCLEOTIDE SEQUENCE [LARGE SCALE GENOMIC DNA]</scope>
    <source>
        <strain>PYR-GCK</strain>
    </source>
</reference>
<keyword id="KW-0687">Ribonucleoprotein</keyword>
<keyword id="KW-0689">Ribosomal protein</keyword>
<accession>A4TE69</accession>
<dbReference type="EMBL" id="CP000656">
    <property type="protein sequence ID" value="ABP46644.1"/>
    <property type="molecule type" value="Genomic_DNA"/>
</dbReference>
<dbReference type="SMR" id="A4TE69"/>
<dbReference type="STRING" id="350054.Mflv_4175"/>
<dbReference type="KEGG" id="mgi:Mflv_4175"/>
<dbReference type="eggNOG" id="COG0228">
    <property type="taxonomic scope" value="Bacteria"/>
</dbReference>
<dbReference type="HOGENOM" id="CLU_100590_1_1_11"/>
<dbReference type="OrthoDB" id="9807878at2"/>
<dbReference type="GO" id="GO:0005737">
    <property type="term" value="C:cytoplasm"/>
    <property type="evidence" value="ECO:0007669"/>
    <property type="project" value="UniProtKB-ARBA"/>
</dbReference>
<dbReference type="GO" id="GO:0015935">
    <property type="term" value="C:small ribosomal subunit"/>
    <property type="evidence" value="ECO:0007669"/>
    <property type="project" value="TreeGrafter"/>
</dbReference>
<dbReference type="GO" id="GO:0003735">
    <property type="term" value="F:structural constituent of ribosome"/>
    <property type="evidence" value="ECO:0007669"/>
    <property type="project" value="InterPro"/>
</dbReference>
<dbReference type="GO" id="GO:0006412">
    <property type="term" value="P:translation"/>
    <property type="evidence" value="ECO:0007669"/>
    <property type="project" value="UniProtKB-UniRule"/>
</dbReference>
<dbReference type="Gene3D" id="3.30.1320.10">
    <property type="match status" value="1"/>
</dbReference>
<dbReference type="HAMAP" id="MF_00385">
    <property type="entry name" value="Ribosomal_bS16"/>
    <property type="match status" value="1"/>
</dbReference>
<dbReference type="InterPro" id="IPR000307">
    <property type="entry name" value="Ribosomal_bS16"/>
</dbReference>
<dbReference type="InterPro" id="IPR020592">
    <property type="entry name" value="Ribosomal_bS16_CS"/>
</dbReference>
<dbReference type="InterPro" id="IPR023803">
    <property type="entry name" value="Ribosomal_bS16_dom_sf"/>
</dbReference>
<dbReference type="NCBIfam" id="NF011093">
    <property type="entry name" value="PRK14520.1"/>
    <property type="match status" value="1"/>
</dbReference>
<dbReference type="NCBIfam" id="TIGR00002">
    <property type="entry name" value="S16"/>
    <property type="match status" value="1"/>
</dbReference>
<dbReference type="PANTHER" id="PTHR12919">
    <property type="entry name" value="30S RIBOSOMAL PROTEIN S16"/>
    <property type="match status" value="1"/>
</dbReference>
<dbReference type="PANTHER" id="PTHR12919:SF20">
    <property type="entry name" value="SMALL RIBOSOMAL SUBUNIT PROTEIN BS16M"/>
    <property type="match status" value="1"/>
</dbReference>
<dbReference type="Pfam" id="PF00886">
    <property type="entry name" value="Ribosomal_S16"/>
    <property type="match status" value="1"/>
</dbReference>
<dbReference type="SUPFAM" id="SSF54565">
    <property type="entry name" value="Ribosomal protein S16"/>
    <property type="match status" value="1"/>
</dbReference>
<dbReference type="PROSITE" id="PS00732">
    <property type="entry name" value="RIBOSOMAL_S16"/>
    <property type="match status" value="1"/>
</dbReference>
<comment type="similarity">
    <text evidence="1">Belongs to the bacterial ribosomal protein bS16 family.</text>
</comment>
<proteinExistence type="inferred from homology"/>
<protein>
    <recommendedName>
        <fullName evidence="1">Small ribosomal subunit protein bS16</fullName>
    </recommendedName>
    <alternativeName>
        <fullName evidence="3">30S ribosomal protein S16</fullName>
    </alternativeName>
</protein>